<name>1A1D_BURCJ</name>
<organism>
    <name type="scientific">Burkholderia cenocepacia (strain ATCC BAA-245 / DSM 16553 / LMG 16656 / NCTC 13227 / J2315 / CF5610)</name>
    <name type="common">Burkholderia cepacia (strain J2315)</name>
    <dbReference type="NCBI Taxonomy" id="216591"/>
    <lineage>
        <taxon>Bacteria</taxon>
        <taxon>Pseudomonadati</taxon>
        <taxon>Pseudomonadota</taxon>
        <taxon>Betaproteobacteria</taxon>
        <taxon>Burkholderiales</taxon>
        <taxon>Burkholderiaceae</taxon>
        <taxon>Burkholderia</taxon>
        <taxon>Burkholderia cepacia complex</taxon>
    </lineage>
</organism>
<evidence type="ECO:0000255" key="1">
    <source>
        <dbReference type="HAMAP-Rule" id="MF_00807"/>
    </source>
</evidence>
<proteinExistence type="inferred from homology"/>
<feature type="chain" id="PRO_1000134009" description="1-aminocyclopropane-1-carboxylate deaminase">
    <location>
        <begin position="1"/>
        <end position="338"/>
    </location>
</feature>
<feature type="active site" description="Nucleophile" evidence="1">
    <location>
        <position position="78"/>
    </location>
</feature>
<feature type="modified residue" description="N6-(pyridoxal phosphate)lysine" evidence="1">
    <location>
        <position position="51"/>
    </location>
</feature>
<sequence length="338" mass="36610">MNLQRFPRYPLTFGPTPIQPLKRLSAHLGGKVELYAKREDCNSGLAFGGNKTRKLEYLVPDALAQGADTLVSIGGVQSNQTRQVAAVAAHLGMKCVLVQEHWVNYEDPVYDRVGNIQLSRMMGADVRLVADGFDIGIRRSWEEAMESVRQAGGKPYPIPAGCSEHPLGGLGFVGFAEEVRAQEAELGFRFDYVVVCSVTGSTQAGMVVGFAADGRADRVIGIDASAKPEQTREQITRIARHTAELVGLGRDIVERDVVLDTRYGGPEYGLPSDGTLEAIRLCARLEGMLTDPVYEGKSMHGMIDKVRLGEFEPGSKVLYAHLGGAPALSAYNGIFRNG</sequence>
<dbReference type="EC" id="3.5.99.7" evidence="1"/>
<dbReference type="EMBL" id="AM747721">
    <property type="protein sequence ID" value="CAR54241.1"/>
    <property type="molecule type" value="Genomic_DNA"/>
</dbReference>
<dbReference type="RefSeq" id="WP_006485468.1">
    <property type="nucleotide sequence ID" value="NC_011001.1"/>
</dbReference>
<dbReference type="SMR" id="B4EJA6"/>
<dbReference type="KEGG" id="bcj:BCAM0385"/>
<dbReference type="eggNOG" id="COG2515">
    <property type="taxonomic scope" value="Bacteria"/>
</dbReference>
<dbReference type="HOGENOM" id="CLU_048897_2_1_4"/>
<dbReference type="BioCyc" id="BCEN216591:G1G1V-4340-MONOMER"/>
<dbReference type="BRENDA" id="3.5.99.7">
    <property type="organism ID" value="8982"/>
</dbReference>
<dbReference type="Proteomes" id="UP000001035">
    <property type="component" value="Chromosome 2"/>
</dbReference>
<dbReference type="GO" id="GO:0008660">
    <property type="term" value="F:1-aminocyclopropane-1-carboxylate deaminase activity"/>
    <property type="evidence" value="ECO:0007669"/>
    <property type="project" value="UniProtKB-UniRule"/>
</dbReference>
<dbReference type="GO" id="GO:0019148">
    <property type="term" value="F:D-cysteine desulfhydrase activity"/>
    <property type="evidence" value="ECO:0007669"/>
    <property type="project" value="TreeGrafter"/>
</dbReference>
<dbReference type="GO" id="GO:0030170">
    <property type="term" value="F:pyridoxal phosphate binding"/>
    <property type="evidence" value="ECO:0007669"/>
    <property type="project" value="InterPro"/>
</dbReference>
<dbReference type="GO" id="GO:0018871">
    <property type="term" value="P:1-aminocyclopropane-1-carboxylate metabolic process"/>
    <property type="evidence" value="ECO:0007669"/>
    <property type="project" value="UniProtKB-UniRule"/>
</dbReference>
<dbReference type="GO" id="GO:0009310">
    <property type="term" value="P:amine catabolic process"/>
    <property type="evidence" value="ECO:0007669"/>
    <property type="project" value="InterPro"/>
</dbReference>
<dbReference type="CDD" id="cd06449">
    <property type="entry name" value="ACCD"/>
    <property type="match status" value="1"/>
</dbReference>
<dbReference type="FunFam" id="3.40.50.1100:FF:000048">
    <property type="entry name" value="1-aminocyclopropane-1-carboxylate deaminase"/>
    <property type="match status" value="1"/>
</dbReference>
<dbReference type="Gene3D" id="3.40.50.1100">
    <property type="match status" value="2"/>
</dbReference>
<dbReference type="HAMAP" id="MF_00807">
    <property type="entry name" value="ACC_deaminase"/>
    <property type="match status" value="1"/>
</dbReference>
<dbReference type="InterPro" id="IPR027278">
    <property type="entry name" value="ACCD_DCysDesulf"/>
</dbReference>
<dbReference type="InterPro" id="IPR005965">
    <property type="entry name" value="ACP_carboxylate_deaminase"/>
</dbReference>
<dbReference type="InterPro" id="IPR020601">
    <property type="entry name" value="ACP_carboxylate_deaminase_bac"/>
</dbReference>
<dbReference type="InterPro" id="IPR001926">
    <property type="entry name" value="TrpB-like_PALP"/>
</dbReference>
<dbReference type="InterPro" id="IPR036052">
    <property type="entry name" value="TrpB-like_PALP_sf"/>
</dbReference>
<dbReference type="NCBIfam" id="TIGR01274">
    <property type="entry name" value="ACC_deam"/>
    <property type="match status" value="1"/>
</dbReference>
<dbReference type="PANTHER" id="PTHR43780">
    <property type="entry name" value="1-AMINOCYCLOPROPANE-1-CARBOXYLATE DEAMINASE-RELATED"/>
    <property type="match status" value="1"/>
</dbReference>
<dbReference type="PANTHER" id="PTHR43780:SF2">
    <property type="entry name" value="1-AMINOCYCLOPROPANE-1-CARBOXYLATE DEAMINASE-RELATED"/>
    <property type="match status" value="1"/>
</dbReference>
<dbReference type="Pfam" id="PF00291">
    <property type="entry name" value="PALP"/>
    <property type="match status" value="1"/>
</dbReference>
<dbReference type="PIRSF" id="PIRSF006278">
    <property type="entry name" value="ACCD_DCysDesulf"/>
    <property type="match status" value="1"/>
</dbReference>
<dbReference type="SUPFAM" id="SSF53686">
    <property type="entry name" value="Tryptophan synthase beta subunit-like PLP-dependent enzymes"/>
    <property type="match status" value="1"/>
</dbReference>
<keyword id="KW-0378">Hydrolase</keyword>
<keyword id="KW-0663">Pyridoxal phosphate</keyword>
<comment type="function">
    <text evidence="1">Catalyzes a cyclopropane ring-opening reaction, the irreversible conversion of 1-aminocyclopropane-1-carboxylate (ACC) to ammonia and alpha-ketobutyrate. Allows growth on ACC as a nitrogen source.</text>
</comment>
<comment type="catalytic activity">
    <reaction evidence="1">
        <text>1-aminocyclopropane-1-carboxylate + H2O = 2-oxobutanoate + NH4(+)</text>
        <dbReference type="Rhea" id="RHEA:16933"/>
        <dbReference type="ChEBI" id="CHEBI:15377"/>
        <dbReference type="ChEBI" id="CHEBI:16763"/>
        <dbReference type="ChEBI" id="CHEBI:28938"/>
        <dbReference type="ChEBI" id="CHEBI:58360"/>
        <dbReference type="EC" id="3.5.99.7"/>
    </reaction>
</comment>
<comment type="cofactor">
    <cofactor evidence="1">
        <name>pyridoxal 5'-phosphate</name>
        <dbReference type="ChEBI" id="CHEBI:597326"/>
    </cofactor>
</comment>
<comment type="subunit">
    <text evidence="1">Homotrimer.</text>
</comment>
<comment type="similarity">
    <text evidence="1">Belongs to the ACC deaminase/D-cysteine desulfhydrase family.</text>
</comment>
<reference key="1">
    <citation type="journal article" date="2009" name="J. Bacteriol.">
        <title>The genome of Burkholderia cenocepacia J2315, an epidemic pathogen of cystic fibrosis patients.</title>
        <authorList>
            <person name="Holden M.T."/>
            <person name="Seth-Smith H.M."/>
            <person name="Crossman L.C."/>
            <person name="Sebaihia M."/>
            <person name="Bentley S.D."/>
            <person name="Cerdeno-Tarraga A.M."/>
            <person name="Thomson N.R."/>
            <person name="Bason N."/>
            <person name="Quail M.A."/>
            <person name="Sharp S."/>
            <person name="Cherevach I."/>
            <person name="Churcher C."/>
            <person name="Goodhead I."/>
            <person name="Hauser H."/>
            <person name="Holroyd N."/>
            <person name="Mungall K."/>
            <person name="Scott P."/>
            <person name="Walker D."/>
            <person name="White B."/>
            <person name="Rose H."/>
            <person name="Iversen P."/>
            <person name="Mil-Homens D."/>
            <person name="Rocha E.P."/>
            <person name="Fialho A.M."/>
            <person name="Baldwin A."/>
            <person name="Dowson C."/>
            <person name="Barrell B.G."/>
            <person name="Govan J.R."/>
            <person name="Vandamme P."/>
            <person name="Hart C.A."/>
            <person name="Mahenthiralingam E."/>
            <person name="Parkhill J."/>
        </authorList>
    </citation>
    <scope>NUCLEOTIDE SEQUENCE [LARGE SCALE GENOMIC DNA]</scope>
    <source>
        <strain>ATCC BAA-245 / DSM 16553 / LMG 16656 / NCTC 13227 / J2315 / CF5610</strain>
    </source>
</reference>
<gene>
    <name evidence="1" type="primary">acdS</name>
    <name type="ordered locus">BceJ2315_38460</name>
    <name type="ORF">BCAM0385</name>
</gene>
<accession>B4EJA6</accession>
<protein>
    <recommendedName>
        <fullName evidence="1">1-aminocyclopropane-1-carboxylate deaminase</fullName>
        <shortName evidence="1">ACC deaminase</shortName>
        <shortName evidence="1">ACCD</shortName>
        <ecNumber evidence="1">3.5.99.7</ecNumber>
    </recommendedName>
</protein>